<organism>
    <name type="scientific">Aliivibrio fischeri (strain MJ11)</name>
    <name type="common">Vibrio fischeri</name>
    <dbReference type="NCBI Taxonomy" id="388396"/>
    <lineage>
        <taxon>Bacteria</taxon>
        <taxon>Pseudomonadati</taxon>
        <taxon>Pseudomonadota</taxon>
        <taxon>Gammaproteobacteria</taxon>
        <taxon>Vibrionales</taxon>
        <taxon>Vibrionaceae</taxon>
        <taxon>Aliivibrio</taxon>
    </lineage>
</organism>
<dbReference type="EC" id="3.6.1.54" evidence="1"/>
<dbReference type="EMBL" id="CP001139">
    <property type="protein sequence ID" value="ACH66250.1"/>
    <property type="molecule type" value="Genomic_DNA"/>
</dbReference>
<dbReference type="RefSeq" id="WP_012533602.1">
    <property type="nucleotide sequence ID" value="NC_011184.1"/>
</dbReference>
<dbReference type="SMR" id="B5FF31"/>
<dbReference type="KEGG" id="vfm:VFMJ11_1712"/>
<dbReference type="HOGENOM" id="CLU_074586_0_0_6"/>
<dbReference type="UniPathway" id="UPA00359">
    <property type="reaction ID" value="UER00480"/>
</dbReference>
<dbReference type="Proteomes" id="UP000001857">
    <property type="component" value="Chromosome I"/>
</dbReference>
<dbReference type="GO" id="GO:0005737">
    <property type="term" value="C:cytoplasm"/>
    <property type="evidence" value="ECO:0007669"/>
    <property type="project" value="InterPro"/>
</dbReference>
<dbReference type="GO" id="GO:0019897">
    <property type="term" value="C:extrinsic component of plasma membrane"/>
    <property type="evidence" value="ECO:0007669"/>
    <property type="project" value="UniProtKB-UniRule"/>
</dbReference>
<dbReference type="GO" id="GO:0030145">
    <property type="term" value="F:manganese ion binding"/>
    <property type="evidence" value="ECO:0007669"/>
    <property type="project" value="UniProtKB-UniRule"/>
</dbReference>
<dbReference type="GO" id="GO:0008758">
    <property type="term" value="F:UDP-2,3-diacylglucosamine hydrolase activity"/>
    <property type="evidence" value="ECO:0007669"/>
    <property type="project" value="UniProtKB-UniRule"/>
</dbReference>
<dbReference type="GO" id="GO:0009245">
    <property type="term" value="P:lipid A biosynthetic process"/>
    <property type="evidence" value="ECO:0007669"/>
    <property type="project" value="UniProtKB-UniRule"/>
</dbReference>
<dbReference type="CDD" id="cd07398">
    <property type="entry name" value="MPP_YbbF-LpxH"/>
    <property type="match status" value="1"/>
</dbReference>
<dbReference type="Gene3D" id="3.60.21.10">
    <property type="match status" value="1"/>
</dbReference>
<dbReference type="HAMAP" id="MF_00575">
    <property type="entry name" value="LpxH"/>
    <property type="match status" value="1"/>
</dbReference>
<dbReference type="InterPro" id="IPR004843">
    <property type="entry name" value="Calcineurin-like_PHP_ApaH"/>
</dbReference>
<dbReference type="InterPro" id="IPR043461">
    <property type="entry name" value="LpxH-like"/>
</dbReference>
<dbReference type="InterPro" id="IPR029052">
    <property type="entry name" value="Metallo-depent_PP-like"/>
</dbReference>
<dbReference type="InterPro" id="IPR010138">
    <property type="entry name" value="UDP-diacylglucosamine_Hdrlase"/>
</dbReference>
<dbReference type="NCBIfam" id="TIGR01854">
    <property type="entry name" value="lipid_A_lpxH"/>
    <property type="match status" value="1"/>
</dbReference>
<dbReference type="NCBIfam" id="NF003743">
    <property type="entry name" value="PRK05340.1"/>
    <property type="match status" value="1"/>
</dbReference>
<dbReference type="PANTHER" id="PTHR34990:SF1">
    <property type="entry name" value="UDP-2,3-DIACYLGLUCOSAMINE HYDROLASE"/>
    <property type="match status" value="1"/>
</dbReference>
<dbReference type="PANTHER" id="PTHR34990">
    <property type="entry name" value="UDP-2,3-DIACYLGLUCOSAMINE HYDROLASE-RELATED"/>
    <property type="match status" value="1"/>
</dbReference>
<dbReference type="Pfam" id="PF00149">
    <property type="entry name" value="Metallophos"/>
    <property type="match status" value="1"/>
</dbReference>
<dbReference type="SUPFAM" id="SSF56300">
    <property type="entry name" value="Metallo-dependent phosphatases"/>
    <property type="match status" value="1"/>
</dbReference>
<proteinExistence type="inferred from homology"/>
<comment type="function">
    <text evidence="1">Hydrolyzes the pyrophosphate bond of UDP-2,3-diacylglucosamine to yield 2,3-diacylglucosamine 1-phosphate (lipid X) and UMP by catalyzing the attack of water at the alpha-P atom. Involved in the biosynthesis of lipid A, a phosphorylated glycolipid that anchors the lipopolysaccharide to the outer membrane of the cell.</text>
</comment>
<comment type="catalytic activity">
    <reaction evidence="1">
        <text>UDP-2-N,3-O-bis[(3R)-3-hydroxytetradecanoyl]-alpha-D-glucosamine + H2O = 2-N,3-O-bis[(3R)-3-hydroxytetradecanoyl]-alpha-D-glucosaminyl 1-phosphate + UMP + 2 H(+)</text>
        <dbReference type="Rhea" id="RHEA:25213"/>
        <dbReference type="ChEBI" id="CHEBI:15377"/>
        <dbReference type="ChEBI" id="CHEBI:15378"/>
        <dbReference type="ChEBI" id="CHEBI:57865"/>
        <dbReference type="ChEBI" id="CHEBI:57957"/>
        <dbReference type="ChEBI" id="CHEBI:78847"/>
        <dbReference type="EC" id="3.6.1.54"/>
    </reaction>
</comment>
<comment type="cofactor">
    <cofactor evidence="1">
        <name>Mn(2+)</name>
        <dbReference type="ChEBI" id="CHEBI:29035"/>
    </cofactor>
    <text evidence="1">Binds 2 Mn(2+) ions per subunit in a binuclear metal center.</text>
</comment>
<comment type="pathway">
    <text evidence="1">Glycolipid biosynthesis; lipid IV(A) biosynthesis; lipid IV(A) from (3R)-3-hydroxytetradecanoyl-[acyl-carrier-protein] and UDP-N-acetyl-alpha-D-glucosamine: step 4/6.</text>
</comment>
<comment type="subcellular location">
    <subcellularLocation>
        <location evidence="1">Cell inner membrane</location>
        <topology evidence="1">Peripheral membrane protein</topology>
        <orientation evidence="1">Cytoplasmic side</orientation>
    </subcellularLocation>
</comment>
<comment type="similarity">
    <text evidence="1">Belongs to the LpxH family.</text>
</comment>
<name>LPXH_ALIFM</name>
<accession>B5FF31</accession>
<gene>
    <name evidence="1" type="primary">lpxH</name>
    <name type="ordered locus">VFMJ11_1712</name>
</gene>
<evidence type="ECO:0000255" key="1">
    <source>
        <dbReference type="HAMAP-Rule" id="MF_00575"/>
    </source>
</evidence>
<sequence length="241" mass="28482">MTILFISDLHLSPLRPDITDCFIDFMQNEAIHAEKLYVLGDLFEFWIGDDDNSPFNVLVKNEFKALTKKGVKCYFIQGNRDFLLNKRFCKETGVELLDDHTVIDLDGEKVLIMHGDTLCIDDIKYQEFRAKVHKPWLQWVFNRIPLFIRQRIVKNVQDKIKEKKQTKTLCIMDVTQSEVERVMQEEGVQRLIHGHTHRPDTHTFISNDKEMTRIVLGDWYSQGSILEYSDKIYSLHKKEFK</sequence>
<reference key="1">
    <citation type="submission" date="2008-08" db="EMBL/GenBank/DDBJ databases">
        <title>Complete sequence of Vibrio fischeri strain MJ11.</title>
        <authorList>
            <person name="Mandel M.J."/>
            <person name="Stabb E.V."/>
            <person name="Ruby E.G."/>
            <person name="Ferriera S."/>
            <person name="Johnson J."/>
            <person name="Kravitz S."/>
            <person name="Beeson K."/>
            <person name="Sutton G."/>
            <person name="Rogers Y.-H."/>
            <person name="Friedman R."/>
            <person name="Frazier M."/>
            <person name="Venter J.C."/>
        </authorList>
    </citation>
    <scope>NUCLEOTIDE SEQUENCE [LARGE SCALE GENOMIC DNA]</scope>
    <source>
        <strain>MJ11</strain>
    </source>
</reference>
<keyword id="KW-0997">Cell inner membrane</keyword>
<keyword id="KW-1003">Cell membrane</keyword>
<keyword id="KW-0378">Hydrolase</keyword>
<keyword id="KW-0441">Lipid A biosynthesis</keyword>
<keyword id="KW-0444">Lipid biosynthesis</keyword>
<keyword id="KW-0443">Lipid metabolism</keyword>
<keyword id="KW-0464">Manganese</keyword>
<keyword id="KW-0472">Membrane</keyword>
<keyword id="KW-0479">Metal-binding</keyword>
<feature type="chain" id="PRO_1000129542" description="UDP-2,3-diacylglucosamine hydrolase">
    <location>
        <begin position="1"/>
        <end position="241"/>
    </location>
</feature>
<feature type="binding site" evidence="1">
    <location>
        <position position="8"/>
    </location>
    <ligand>
        <name>Mn(2+)</name>
        <dbReference type="ChEBI" id="CHEBI:29035"/>
        <label>1</label>
    </ligand>
</feature>
<feature type="binding site" evidence="1">
    <location>
        <position position="10"/>
    </location>
    <ligand>
        <name>Mn(2+)</name>
        <dbReference type="ChEBI" id="CHEBI:29035"/>
        <label>1</label>
    </ligand>
</feature>
<feature type="binding site" evidence="1">
    <location>
        <position position="41"/>
    </location>
    <ligand>
        <name>Mn(2+)</name>
        <dbReference type="ChEBI" id="CHEBI:29035"/>
        <label>1</label>
    </ligand>
</feature>
<feature type="binding site" evidence="1">
    <location>
        <position position="41"/>
    </location>
    <ligand>
        <name>Mn(2+)</name>
        <dbReference type="ChEBI" id="CHEBI:29035"/>
        <label>2</label>
    </ligand>
</feature>
<feature type="binding site" evidence="1">
    <location>
        <begin position="79"/>
        <end position="80"/>
    </location>
    <ligand>
        <name>substrate</name>
    </ligand>
</feature>
<feature type="binding site" evidence="1">
    <location>
        <position position="79"/>
    </location>
    <ligand>
        <name>Mn(2+)</name>
        <dbReference type="ChEBI" id="CHEBI:29035"/>
        <label>2</label>
    </ligand>
</feature>
<feature type="binding site" evidence="1">
    <location>
        <position position="114"/>
    </location>
    <ligand>
        <name>Mn(2+)</name>
        <dbReference type="ChEBI" id="CHEBI:29035"/>
        <label>2</label>
    </ligand>
</feature>
<feature type="binding site" evidence="1">
    <location>
        <position position="122"/>
    </location>
    <ligand>
        <name>substrate</name>
    </ligand>
</feature>
<feature type="binding site" evidence="1">
    <location>
        <position position="164"/>
    </location>
    <ligand>
        <name>substrate</name>
    </ligand>
</feature>
<feature type="binding site" evidence="1">
    <location>
        <position position="167"/>
    </location>
    <ligand>
        <name>substrate</name>
    </ligand>
</feature>
<feature type="binding site" evidence="1">
    <location>
        <position position="195"/>
    </location>
    <ligand>
        <name>Mn(2+)</name>
        <dbReference type="ChEBI" id="CHEBI:29035"/>
        <label>2</label>
    </ligand>
</feature>
<feature type="binding site" evidence="1">
    <location>
        <position position="195"/>
    </location>
    <ligand>
        <name>substrate</name>
    </ligand>
</feature>
<feature type="binding site" evidence="1">
    <location>
        <position position="197"/>
    </location>
    <ligand>
        <name>Mn(2+)</name>
        <dbReference type="ChEBI" id="CHEBI:29035"/>
        <label>1</label>
    </ligand>
</feature>
<protein>
    <recommendedName>
        <fullName evidence="1">UDP-2,3-diacylglucosamine hydrolase</fullName>
        <ecNumber evidence="1">3.6.1.54</ecNumber>
    </recommendedName>
    <alternativeName>
        <fullName evidence="1">UDP-2,3-diacylglucosamine diphosphatase</fullName>
    </alternativeName>
</protein>